<keyword id="KW-0106">Calcium</keyword>
<keyword id="KW-0130">Cell adhesion</keyword>
<keyword id="KW-0965">Cell junction</keyword>
<keyword id="KW-1003">Cell membrane</keyword>
<keyword id="KW-0165">Cleavage on pair of basic residues</keyword>
<keyword id="KW-0963">Cytoplasm</keyword>
<keyword id="KW-1015">Disulfide bond</keyword>
<keyword id="KW-0967">Endosome</keyword>
<keyword id="KW-0325">Glycoprotein</keyword>
<keyword id="KW-0333">Golgi apparatus</keyword>
<keyword id="KW-0472">Membrane</keyword>
<keyword id="KW-0479">Metal-binding</keyword>
<keyword id="KW-0597">Phosphoprotein</keyword>
<keyword id="KW-1185">Reference proteome</keyword>
<keyword id="KW-0677">Repeat</keyword>
<keyword id="KW-0732">Signal</keyword>
<keyword id="KW-0812">Transmembrane</keyword>
<keyword id="KW-1133">Transmembrane helix</keyword>
<keyword id="KW-0832">Ubl conjugation</keyword>
<protein>
    <recommendedName>
        <fullName>Cadherin-1</fullName>
    </recommendedName>
    <alternativeName>
        <fullName>Epithelial cadherin</fullName>
        <shortName>E-cadherin</shortName>
    </alternativeName>
    <alternativeName>
        <fullName>Uvomorulin</fullName>
    </alternativeName>
    <cdAntigenName>CD324</cdAntigenName>
    <component>
        <recommendedName>
            <fullName>E-Cad/CTF1</fullName>
        </recommendedName>
    </component>
    <component>
        <recommendedName>
            <fullName>E-Cad/CTF2</fullName>
        </recommendedName>
    </component>
    <component>
        <recommendedName>
            <fullName>E-Cad/CTF3</fullName>
        </recommendedName>
    </component>
</protein>
<accession>Q5RAX1</accession>
<proteinExistence type="evidence at transcript level"/>
<gene>
    <name type="primary">CDH1</name>
</gene>
<evidence type="ECO:0000250" key="1"/>
<evidence type="ECO:0000250" key="2">
    <source>
        <dbReference type="UniProtKB" id="F1PAA9"/>
    </source>
</evidence>
<evidence type="ECO:0000250" key="3">
    <source>
        <dbReference type="UniProtKB" id="P09803"/>
    </source>
</evidence>
<evidence type="ECO:0000250" key="4">
    <source>
        <dbReference type="UniProtKB" id="P12830"/>
    </source>
</evidence>
<evidence type="ECO:0000250" key="5">
    <source>
        <dbReference type="UniProtKB" id="Q9R0T4"/>
    </source>
</evidence>
<evidence type="ECO:0000255" key="6"/>
<evidence type="ECO:0000255" key="7">
    <source>
        <dbReference type="PROSITE-ProRule" id="PRU00043"/>
    </source>
</evidence>
<evidence type="ECO:0000256" key="8">
    <source>
        <dbReference type="SAM" id="MobiDB-lite"/>
    </source>
</evidence>
<dbReference type="EMBL" id="CR858890">
    <property type="protein sequence ID" value="CAH91089.1"/>
    <property type="molecule type" value="mRNA"/>
</dbReference>
<dbReference type="RefSeq" id="NP_001127374.1">
    <property type="nucleotide sequence ID" value="NM_001133902.1"/>
</dbReference>
<dbReference type="SMR" id="Q5RAX1"/>
<dbReference type="FunCoup" id="Q5RAX1">
    <property type="interactions" value="764"/>
</dbReference>
<dbReference type="GlyCosmos" id="Q5RAX1">
    <property type="glycosylation" value="12 sites, No reported glycans"/>
</dbReference>
<dbReference type="GeneID" id="100174439"/>
<dbReference type="KEGG" id="pon:100174439"/>
<dbReference type="CTD" id="999"/>
<dbReference type="InParanoid" id="Q5RAX1"/>
<dbReference type="OrthoDB" id="6079678at2759"/>
<dbReference type="Proteomes" id="UP000001595">
    <property type="component" value="Unplaced"/>
</dbReference>
<dbReference type="GO" id="GO:0005912">
    <property type="term" value="C:adherens junction"/>
    <property type="evidence" value="ECO:0000250"/>
    <property type="project" value="UniProtKB"/>
</dbReference>
<dbReference type="GO" id="GO:0043296">
    <property type="term" value="C:apical junction complex"/>
    <property type="evidence" value="ECO:0007669"/>
    <property type="project" value="TreeGrafter"/>
</dbReference>
<dbReference type="GO" id="GO:0016342">
    <property type="term" value="C:catenin complex"/>
    <property type="evidence" value="ECO:0007669"/>
    <property type="project" value="TreeGrafter"/>
</dbReference>
<dbReference type="GO" id="GO:0030054">
    <property type="term" value="C:cell junction"/>
    <property type="evidence" value="ECO:0000250"/>
    <property type="project" value="UniProtKB"/>
</dbReference>
<dbReference type="GO" id="GO:0005911">
    <property type="term" value="C:cell-cell junction"/>
    <property type="evidence" value="ECO:0000250"/>
    <property type="project" value="UniProtKB"/>
</dbReference>
<dbReference type="GO" id="GO:0005737">
    <property type="term" value="C:cytoplasm"/>
    <property type="evidence" value="ECO:0000250"/>
    <property type="project" value="UniProtKB"/>
</dbReference>
<dbReference type="GO" id="GO:0030057">
    <property type="term" value="C:desmosome"/>
    <property type="evidence" value="ECO:0007669"/>
    <property type="project" value="UniProtKB-SubCell"/>
</dbReference>
<dbReference type="GO" id="GO:0005768">
    <property type="term" value="C:endosome"/>
    <property type="evidence" value="ECO:0007669"/>
    <property type="project" value="UniProtKB-SubCell"/>
</dbReference>
<dbReference type="GO" id="GO:0016600">
    <property type="term" value="C:flotillin complex"/>
    <property type="evidence" value="ECO:0007669"/>
    <property type="project" value="TreeGrafter"/>
</dbReference>
<dbReference type="GO" id="GO:0005794">
    <property type="term" value="C:Golgi apparatus"/>
    <property type="evidence" value="ECO:0007669"/>
    <property type="project" value="UniProtKB-SubCell"/>
</dbReference>
<dbReference type="GO" id="GO:0005886">
    <property type="term" value="C:plasma membrane"/>
    <property type="evidence" value="ECO:0000250"/>
    <property type="project" value="UniProtKB"/>
</dbReference>
<dbReference type="GO" id="GO:0008013">
    <property type="term" value="F:beta-catenin binding"/>
    <property type="evidence" value="ECO:0007669"/>
    <property type="project" value="TreeGrafter"/>
</dbReference>
<dbReference type="GO" id="GO:0045296">
    <property type="term" value="F:cadherin binding"/>
    <property type="evidence" value="ECO:0007669"/>
    <property type="project" value="TreeGrafter"/>
</dbReference>
<dbReference type="GO" id="GO:0005509">
    <property type="term" value="F:calcium ion binding"/>
    <property type="evidence" value="ECO:0007669"/>
    <property type="project" value="InterPro"/>
</dbReference>
<dbReference type="GO" id="GO:0034332">
    <property type="term" value="P:adherens junction organization"/>
    <property type="evidence" value="ECO:0007669"/>
    <property type="project" value="TreeGrafter"/>
</dbReference>
<dbReference type="GO" id="GO:0016339">
    <property type="term" value="P:calcium-dependent cell-cell adhesion via plasma membrane cell adhesion molecules"/>
    <property type="evidence" value="ECO:0007669"/>
    <property type="project" value="TreeGrafter"/>
</dbReference>
<dbReference type="GO" id="GO:0016477">
    <property type="term" value="P:cell migration"/>
    <property type="evidence" value="ECO:0007669"/>
    <property type="project" value="TreeGrafter"/>
</dbReference>
<dbReference type="GO" id="GO:0000902">
    <property type="term" value="P:cell morphogenesis"/>
    <property type="evidence" value="ECO:0007669"/>
    <property type="project" value="TreeGrafter"/>
</dbReference>
<dbReference type="GO" id="GO:0044331">
    <property type="term" value="P:cell-cell adhesion mediated by cadherin"/>
    <property type="evidence" value="ECO:0007669"/>
    <property type="project" value="TreeGrafter"/>
</dbReference>
<dbReference type="GO" id="GO:0002159">
    <property type="term" value="P:desmosome assembly"/>
    <property type="evidence" value="ECO:0000250"/>
    <property type="project" value="UniProtKB"/>
</dbReference>
<dbReference type="GO" id="GO:0007156">
    <property type="term" value="P:homophilic cell adhesion via plasma membrane adhesion molecules"/>
    <property type="evidence" value="ECO:0007669"/>
    <property type="project" value="InterPro"/>
</dbReference>
<dbReference type="GO" id="GO:1903829">
    <property type="term" value="P:positive regulation of protein localization"/>
    <property type="evidence" value="ECO:0000250"/>
    <property type="project" value="UniProtKB"/>
</dbReference>
<dbReference type="GO" id="GO:0010468">
    <property type="term" value="P:regulation of gene expression"/>
    <property type="evidence" value="ECO:0000250"/>
    <property type="project" value="UniProtKB"/>
</dbReference>
<dbReference type="GO" id="GO:0007416">
    <property type="term" value="P:synapse assembly"/>
    <property type="evidence" value="ECO:0007669"/>
    <property type="project" value="TreeGrafter"/>
</dbReference>
<dbReference type="CDD" id="cd00031">
    <property type="entry name" value="CA_like"/>
    <property type="match status" value="1"/>
</dbReference>
<dbReference type="CDD" id="cd11304">
    <property type="entry name" value="Cadherin_repeat"/>
    <property type="match status" value="3"/>
</dbReference>
<dbReference type="FunFam" id="2.60.40.60:FF:000011">
    <property type="entry name" value="Cadherin 1"/>
    <property type="match status" value="1"/>
</dbReference>
<dbReference type="FunFam" id="2.60.40.60:FF:000191">
    <property type="entry name" value="Cadherin 1"/>
    <property type="match status" value="1"/>
</dbReference>
<dbReference type="FunFam" id="2.60.40.60:FF:000019">
    <property type="entry name" value="Cadherin 2"/>
    <property type="match status" value="1"/>
</dbReference>
<dbReference type="FunFam" id="2.60.40.60:FF:000022">
    <property type="entry name" value="Cadherin 2"/>
    <property type="match status" value="1"/>
</dbReference>
<dbReference type="FunFam" id="2.60.40.60:FF:000027">
    <property type="entry name" value="Cadherin 2"/>
    <property type="match status" value="1"/>
</dbReference>
<dbReference type="FunFam" id="4.10.900.10:FF:000001">
    <property type="entry name" value="Cadherin 2"/>
    <property type="match status" value="1"/>
</dbReference>
<dbReference type="FunFam" id="2.60.40.60:FF:000031">
    <property type="entry name" value="Cadherin 3"/>
    <property type="match status" value="1"/>
</dbReference>
<dbReference type="Gene3D" id="2.60.40.60">
    <property type="entry name" value="Cadherins"/>
    <property type="match status" value="6"/>
</dbReference>
<dbReference type="Gene3D" id="4.10.900.10">
    <property type="entry name" value="TCF3-CBD (Catenin binding domain)"/>
    <property type="match status" value="1"/>
</dbReference>
<dbReference type="InterPro" id="IPR039808">
    <property type="entry name" value="Cadherin"/>
</dbReference>
<dbReference type="InterPro" id="IPR002126">
    <property type="entry name" value="Cadherin-like_dom"/>
</dbReference>
<dbReference type="InterPro" id="IPR015919">
    <property type="entry name" value="Cadherin-like_sf"/>
</dbReference>
<dbReference type="InterPro" id="IPR020894">
    <property type="entry name" value="Cadherin_CS"/>
</dbReference>
<dbReference type="InterPro" id="IPR014868">
    <property type="entry name" value="Cadherin_pro_dom"/>
</dbReference>
<dbReference type="InterPro" id="IPR000233">
    <property type="entry name" value="Cadherin_Y-type_LIR"/>
</dbReference>
<dbReference type="InterPro" id="IPR027397">
    <property type="entry name" value="Catenin-bd_sf"/>
</dbReference>
<dbReference type="PANTHER" id="PTHR24027:SF319">
    <property type="entry name" value="CADHERIN-1"/>
    <property type="match status" value="1"/>
</dbReference>
<dbReference type="PANTHER" id="PTHR24027">
    <property type="entry name" value="CADHERIN-23"/>
    <property type="match status" value="1"/>
</dbReference>
<dbReference type="Pfam" id="PF01049">
    <property type="entry name" value="CADH_Y-type_LIR"/>
    <property type="match status" value="1"/>
</dbReference>
<dbReference type="Pfam" id="PF00028">
    <property type="entry name" value="Cadherin"/>
    <property type="match status" value="5"/>
</dbReference>
<dbReference type="Pfam" id="PF08758">
    <property type="entry name" value="Cadherin_pro"/>
    <property type="match status" value="1"/>
</dbReference>
<dbReference type="PRINTS" id="PR00205">
    <property type="entry name" value="CADHERIN"/>
</dbReference>
<dbReference type="SMART" id="SM00112">
    <property type="entry name" value="CA"/>
    <property type="match status" value="4"/>
</dbReference>
<dbReference type="SMART" id="SM01055">
    <property type="entry name" value="Cadherin_pro"/>
    <property type="match status" value="1"/>
</dbReference>
<dbReference type="SUPFAM" id="SSF49313">
    <property type="entry name" value="Cadherin-like"/>
    <property type="match status" value="6"/>
</dbReference>
<dbReference type="PROSITE" id="PS00232">
    <property type="entry name" value="CADHERIN_1"/>
    <property type="match status" value="3"/>
</dbReference>
<dbReference type="PROSITE" id="PS50268">
    <property type="entry name" value="CADHERIN_2"/>
    <property type="match status" value="4"/>
</dbReference>
<reference key="1">
    <citation type="submission" date="2004-11" db="EMBL/GenBank/DDBJ databases">
        <authorList>
            <consortium name="The German cDNA consortium"/>
        </authorList>
    </citation>
    <scope>NUCLEOTIDE SEQUENCE [LARGE SCALE MRNA]</scope>
    <source>
        <tissue>Kidney</tissue>
    </source>
</reference>
<name>CADH1_PONAB</name>
<organism>
    <name type="scientific">Pongo abelii</name>
    <name type="common">Sumatran orangutan</name>
    <name type="synonym">Pongo pygmaeus abelii</name>
    <dbReference type="NCBI Taxonomy" id="9601"/>
    <lineage>
        <taxon>Eukaryota</taxon>
        <taxon>Metazoa</taxon>
        <taxon>Chordata</taxon>
        <taxon>Craniata</taxon>
        <taxon>Vertebrata</taxon>
        <taxon>Euteleostomi</taxon>
        <taxon>Mammalia</taxon>
        <taxon>Eutheria</taxon>
        <taxon>Euarchontoglires</taxon>
        <taxon>Primates</taxon>
        <taxon>Haplorrhini</taxon>
        <taxon>Catarrhini</taxon>
        <taxon>Hominidae</taxon>
        <taxon>Pongo</taxon>
    </lineage>
</organism>
<feature type="signal peptide" evidence="6">
    <location>
        <begin position="1"/>
        <end position="22"/>
    </location>
</feature>
<feature type="propeptide" id="PRO_0000288032" evidence="6">
    <location>
        <begin position="23"/>
        <end position="154"/>
    </location>
</feature>
<feature type="chain" id="PRO_0000288033" description="Cadherin-1">
    <location>
        <begin position="155"/>
        <end position="882"/>
    </location>
</feature>
<feature type="chain" id="PRO_0000288034" description="E-Cad/CTF1" evidence="1">
    <location>
        <begin position="701"/>
        <end position="882"/>
    </location>
</feature>
<feature type="chain" id="PRO_0000288035" description="E-Cad/CTF2" evidence="1">
    <location>
        <begin position="732"/>
        <end position="882"/>
    </location>
</feature>
<feature type="chain" id="PRO_0000288036" description="E-Cad/CTF3" evidence="1">
    <location>
        <begin position="751"/>
        <end position="882"/>
    </location>
</feature>
<feature type="topological domain" description="Extracellular" evidence="6">
    <location>
        <begin position="155"/>
        <end position="709"/>
    </location>
</feature>
<feature type="transmembrane region" description="Helical" evidence="6">
    <location>
        <begin position="710"/>
        <end position="730"/>
    </location>
</feature>
<feature type="topological domain" description="Cytoplasmic" evidence="6">
    <location>
        <begin position="731"/>
        <end position="882"/>
    </location>
</feature>
<feature type="domain" description="Cadherin 1" evidence="7">
    <location>
        <begin position="155"/>
        <end position="262"/>
    </location>
</feature>
<feature type="domain" description="Cadherin 2" evidence="7">
    <location>
        <begin position="263"/>
        <end position="375"/>
    </location>
</feature>
<feature type="domain" description="Cadherin 3" evidence="7">
    <location>
        <begin position="376"/>
        <end position="486"/>
    </location>
</feature>
<feature type="domain" description="Cadherin 4" evidence="7">
    <location>
        <begin position="487"/>
        <end position="593"/>
    </location>
</feature>
<feature type="domain" description="Cadherin 5" evidence="7">
    <location>
        <begin position="594"/>
        <end position="697"/>
    </location>
</feature>
<feature type="region of interest" description="Disordered" evidence="8">
    <location>
        <begin position="747"/>
        <end position="767"/>
    </location>
</feature>
<feature type="region of interest" description="Required for binding CTNND1 and PSEN1" evidence="1">
    <location>
        <begin position="758"/>
        <end position="769"/>
    </location>
</feature>
<feature type="region of interest" description="Required for binding alpha, beta and gamma catenins" evidence="1">
    <location>
        <begin position="811"/>
        <end position="882"/>
    </location>
</feature>
<feature type="compositionally biased region" description="Acidic residues" evidence="8">
    <location>
        <begin position="755"/>
        <end position="767"/>
    </location>
</feature>
<feature type="binding site" evidence="1">
    <location>
        <position position="257"/>
    </location>
    <ligand>
        <name>Ca(2+)</name>
        <dbReference type="ChEBI" id="CHEBI:29108"/>
        <label>1</label>
    </ligand>
</feature>
<feature type="binding site" evidence="1">
    <location>
        <position position="257"/>
    </location>
    <ligand>
        <name>Ca(2+)</name>
        <dbReference type="ChEBI" id="CHEBI:29108"/>
        <label>2</label>
    </ligand>
</feature>
<feature type="binding site" evidence="1">
    <location>
        <position position="288"/>
    </location>
    <ligand>
        <name>Ca(2+)</name>
        <dbReference type="ChEBI" id="CHEBI:29108"/>
        <label>3</label>
    </ligand>
</feature>
<feature type="site" description="Cleavage; by a metalloproteinase" evidence="1">
    <location>
        <begin position="700"/>
        <end position="701"/>
    </location>
</feature>
<feature type="site" description="Cleavage; by gamma-secretase/PS1" evidence="1">
    <location>
        <begin position="731"/>
        <end position="732"/>
    </location>
</feature>
<feature type="site" description="Cleavage; by caspase-3" evidence="1">
    <location>
        <begin position="750"/>
        <end position="751"/>
    </location>
</feature>
<feature type="modified residue" description="Phosphotyrosine; by SRC" evidence="4">
    <location>
        <position position="753"/>
    </location>
</feature>
<feature type="modified residue" description="Phosphotyrosine; by SRC" evidence="4">
    <location>
        <position position="754"/>
    </location>
</feature>
<feature type="modified residue" description="Phosphotyrosine; by SRC" evidence="4">
    <location>
        <position position="755"/>
    </location>
</feature>
<feature type="modified residue" description="Phosphoserine" evidence="4">
    <location>
        <position position="770"/>
    </location>
</feature>
<feature type="modified residue" description="Phosphoserine" evidence="4">
    <location>
        <position position="793"/>
    </location>
</feature>
<feature type="modified residue" description="Phosphoserine" evidence="3">
    <location>
        <position position="838"/>
    </location>
</feature>
<feature type="modified residue" description="Phosphoserine" evidence="3">
    <location>
        <position position="840"/>
    </location>
</feature>
<feature type="modified residue" description="Phosphoserine" evidence="3">
    <location>
        <position position="846"/>
    </location>
</feature>
<feature type="glycosylation site" description="N-linked (GlcNAc...) asparagine" evidence="6">
    <location>
        <position position="144"/>
    </location>
</feature>
<feature type="glycosylation site" description="O-linked (Man...) serine" evidence="3">
    <location>
        <position position="280"/>
    </location>
</feature>
<feature type="glycosylation site" description="O-linked (Man...) threonine" evidence="3">
    <location>
        <position position="285"/>
    </location>
</feature>
<feature type="glycosylation site" description="O-linked (Man...) threonine" evidence="3">
    <location>
        <position position="358"/>
    </location>
</feature>
<feature type="glycosylation site" description="O-linked (Man...) threonine" evidence="3">
    <location>
        <position position="470"/>
    </location>
</feature>
<feature type="glycosylation site" description="O-linked (Man...) threonine" evidence="3">
    <location>
        <position position="472"/>
    </location>
</feature>
<feature type="glycosylation site" description="O-linked (Man...) threonine" evidence="3">
    <location>
        <position position="509"/>
    </location>
</feature>
<feature type="glycosylation site" description="N-linked (GlcNAc...) asparagine" evidence="6">
    <location>
        <position position="558"/>
    </location>
</feature>
<feature type="glycosylation site" description="O-linked (Man...) threonine" evidence="3">
    <location>
        <position position="576"/>
    </location>
</feature>
<feature type="glycosylation site" description="O-linked (Man...) threonine" evidence="3">
    <location>
        <position position="578"/>
    </location>
</feature>
<feature type="glycosylation site" description="O-linked (Man...) threonine" evidence="3">
    <location>
        <position position="580"/>
    </location>
</feature>
<feature type="glycosylation site" description="N-linked (GlcNAc...) asparagine" evidence="6">
    <location>
        <position position="637"/>
    </location>
</feature>
<feature type="disulfide bond" description="Interchain" evidence="1">
    <location>
        <position position="163"/>
    </location>
</feature>
<comment type="function">
    <text evidence="2 4">Cadherins are calcium-dependent cell adhesion proteins. They preferentially interact with themselves in a homophilic manner in connecting cells; cadherins may thus contribute to the sorting of heterogeneous cell types. CDH1 is involved in mechanisms regulating cell-cell adhesions, mobility and proliferation of epithelial cells. Promotes organization of radial actin fiber structure and cellular response to contractile forces, via its interaction with AMOTL2 which facilitates anchoring of radial actin fibers to CDH1 junction complexes at the cell membrane (By similarity). Plays a role in the early stages of desmosome cell-cell junction formation via facilitating the recruitment of DSG2 and DSP to desmosome plaques (By similarity). Has a potent invasive suppressor role. It is a ligand for integrin alpha-E/beta-7 (By similarity).</text>
</comment>
<comment type="function">
    <text evidence="4">E-Cad/CTF2 promotes non-amyloidogenic degradation of Abeta precursors. Has a strong inhibitory effect on APP C99 and C83 production.</text>
</comment>
<comment type="subunit">
    <text evidence="2 3 4 5">Homodimer; disulfide-linked. Component of an E-cadherin/ catenin adhesion complex composed of at least E-cadherin/CDH1, beta-catenin/CTNNB1 or gamma-catenin/JUP, and potentially alpha-catenin/CTNNA1; the complex is located to adherens junctions. Found in a complex composed of CDH1, RAP1A and PKP3; PKP3 acts as a scaffold protein within the complex, the complex is required for CDH1 localization to mature desmosome cell junctions (By similarity). Interacts with the TRPV4 and CTNNB1 complex. Interacts with CTNND1. The stable association of CTNNA1 is controversial as CTNNA1 was shown not to bind to F-actin when assembled in the complex. Alternatively, the CTNNA1-containing complex may be linked to F-actin by other proteins such as LIMA1. Interaction with PSEN1, cleaves CDH1 resulting in the disassociation of cadherin-based adherens junctions (CAJs). Interacts with AJAP1 and DLGAP5. Interacts with TBC1D2. Interacts with LIMA1. Interacts with CAV1. Interacts with PIP5K1C. Interacts with RAB8B. Interacts with DDR1; this stabilizes CDH1 at the cell surface and inhibits its internalization. Interacts with RAPGEF2. Interacts with KLRG1. Forms a ternary complex composed of ADAM10, CADH1 and EPHA4; within the complex, CADH1 is cleaved by ADAM10 which disrupts adherens junctions (By similarity). Interacts with SPEF1 (By similarity). Interacts with CTNNB1 and PKP2 (By similarity). Interacts with AMOTL2; the interaction may facilitate binding of radial actin fibers to cell junction complexes (By similarity). Interacts with DSG3; the interaction is required for CDH1 localization to developing adherens junctions (By similarity).</text>
</comment>
<comment type="subcellular location">
    <subcellularLocation>
        <location evidence="4">Cell junction</location>
        <location evidence="4">Adherens junction</location>
    </subcellularLocation>
    <subcellularLocation>
        <location evidence="4">Cell membrane</location>
        <topology evidence="1">Single-pass type I membrane protein</topology>
    </subcellularLocation>
    <subcellularLocation>
        <location evidence="4">Endosome</location>
    </subcellularLocation>
    <subcellularLocation>
        <location evidence="4">Golgi apparatus</location>
        <location evidence="4">trans-Golgi network</location>
    </subcellularLocation>
    <subcellularLocation>
        <location evidence="3">Cytoplasm</location>
    </subcellularLocation>
    <subcellularLocation>
        <location evidence="4">Cell junction</location>
        <location evidence="4">Desmosome</location>
    </subcellularLocation>
    <text evidence="1 3 4">Colocalizes with DLGAP5 at sites of cell-cell contact in intestinal epithelial cells. Anchored to actin microfilaments through association with alpha-, beta- and gamma-catenin. Sequential proteolysis induced by apoptosis or calcium influx, results in translocation from sites of cell-cell contact to the cytoplasm. Colocalizes with RAB11A endosomes during its transport from the Golgi apparatus to the plasma membrane (By similarity). Recruited to desmosomes at the initial assembly phase and also accumulates progressively at mature desmosome cell-cell junctions (By similarity). Localizes to cell-cell contacts as keratinocyte differentiation progresses (By similarity).</text>
</comment>
<comment type="domain">
    <text evidence="4">Three calcium ions are usually bound at the interface of each cadherin domain and strengthen the connections, imparting a strong curvature to the full-length ectodomain.</text>
</comment>
<comment type="PTM">
    <text evidence="3 4">During apoptosis or with calcium influx, cleaved by a membrane-bound metalloproteinase (ADAM10), PS1/gamma-secretase and caspase-3 (By similarity). Processing by the metalloproteinase, induced by calcium influx, causes disruption of cell-cell adhesion and the subsequent release of beta-catenin into the cytoplasm (By similarity). The residual membrane-tethered cleavage product is rapidly degraded via an intracellular proteolytic pathway (By similarity). Cleavage by caspase-3 releases the cytoplasmic tail resulting in disintegration of the actin microfilament system (By similarity). The gamma-secretase-mediated cleavage promotes disassembly of adherens junctions (By similarity). During development of the cochlear organ of Corti, cleavage by ADAM10 at adherens junctions promotes pillar cell separation (By similarity).</text>
</comment>
<comment type="PTM">
    <text evidence="1 4">N-glycosylation at Asn-637 is essential for expression, folding and trafficking. Addition of bisecting N-acetylglucosamine by MGAT3 modulates its cell membrane location (By similarity).</text>
</comment>
<comment type="PTM">
    <text evidence="1">Ubiquitinated by a SCF complex containing SKP2, which requires prior phosphorylation by CK1/CSNK1A1. Ubiquitinated by CBLL1/HAKAI, requires prior phosphorylation at Tyr-754 (By similarity).</text>
</comment>
<comment type="PTM">
    <text evidence="3">O-glycosylated. O-manosylated by TMTC1, TMTC2, TMTC3 or TMTC4. Thr-285 and Thr-509 are O-mannosylated by TMTC2 or TMTC4 but not TMTC1 or TMTC3.</text>
</comment>
<sequence>MGPWSRSLSALLLLLQVSSWLCQEPEPCHPGFDAESYTFTVPRRHLERGRVLGRVNFEDCTGRQRTAYFSLDTRFKVGTDGVITVKRPLRFHNPQIHFLVYAWDSTYRKFSTKVTLNTVGHHHRPLPHQASVSGIQAELLTFPNSSSGLRRRKRDWVIPPISCPENEKGPFPKNLVQIKSNKDKEGKVFYSITGQGADTPPVGVFIIERETGWLKVTEPLDRERIATYTLFSHAVSSNGNAVEDPMEILITVTDQNDNKPEFTQEVFKGSVMEGALPGTSVMEVTATDADDDVNTYNAAIAYTILSQDPELPDKNMFTINRNTGVISVVTTGLDRESFPTYTLVVQAADLQGEGLSTTATAVITVTDTNDNPPVFNPTTYKGQVPEDEANVVITTLKVTDADAPSTPAWEAVYTILNDNGGQFVVTTNPVNNDGILKTAKGLDFEAKQQYILHVAVTNVVPFEVSLTTSTATVTVDVLDVNEAPIFVPPEKRVEVSEDFGVGQEITSYTAWEPDTFMEQKITYRIWRDTANWLEINPDTGAISTRAELDREDVEHVKNSTYTALIIATDNGSPVATGTGTLLLILSDVNDNAPIPEPRTLFFCERNPKPQVINIIDADLPPNTSPFTAELTHGASANWTIQYNDPTQESIILKPKMALEVGDYKINLKLMDNQNKDQVTTLEVGVCDCEGVAGVCKKAQPIEAGLQIPAILGILGGILALLILILLLLLFLRRRAVVKEPLLPPEDDTRDNVYYYDEEGGGEEDQDFDLSQLHRGLDARPEVTRNDVAPTLMSVPRYLPRPANPVEIGNFIDENLKAADTDPTAPPYDSLLVFDYEGSGSEAASLSSLNSSESDKDQDYDYLNEWGNRFKKLADMYGGGEDD</sequence>